<comment type="function">
    <text>Involved in F pilus assembly.</text>
</comment>
<comment type="similarity">
    <text evidence="1">Belongs to the TraE family.</text>
</comment>
<dbReference type="EMBL" id="X13681">
    <property type="protein sequence ID" value="CAA31975.1"/>
    <property type="molecule type" value="Genomic_DNA"/>
</dbReference>
<dbReference type="PIR" id="S03312">
    <property type="entry name" value="S03312"/>
</dbReference>
<dbReference type="RefSeq" id="WP_000399804.1">
    <property type="nucleotide sequence ID" value="NZ_WWEV01000072.1"/>
</dbReference>
<dbReference type="RefSeq" id="YP_003108304.1">
    <property type="nucleotide sequence ID" value="NC_013122.1"/>
</dbReference>
<dbReference type="RefSeq" id="YP_003829136.1">
    <property type="nucleotide sequence ID" value="NC_014384.1"/>
</dbReference>
<dbReference type="RefSeq" id="YP_003829261.1">
    <property type="nucleotide sequence ID" value="NC_014385.1"/>
</dbReference>
<dbReference type="SMR" id="P10514"/>
<dbReference type="InterPro" id="IPR007973">
    <property type="entry name" value="Pilus_assembly_TraE"/>
</dbReference>
<dbReference type="NCBIfam" id="TIGR02761">
    <property type="entry name" value="TraE_TIGR"/>
    <property type="match status" value="1"/>
</dbReference>
<dbReference type="Pfam" id="PF05309">
    <property type="entry name" value="TraE"/>
    <property type="match status" value="1"/>
</dbReference>
<reference key="1">
    <citation type="journal article" date="1989" name="Nucleic Acids Res.">
        <title>A stable core region of the tra operon mRNA of plasmid R1-19.</title>
        <authorList>
            <person name="Koraimann G.M."/>
            <person name="Hoegenauer G."/>
        </authorList>
    </citation>
    <scope>NUCLEOTIDE SEQUENCE [GENOMIC DNA]</scope>
</reference>
<proteinExistence type="inferred from homology"/>
<gene>
    <name type="primary">traE</name>
</gene>
<name>TRAE2_ECOLX</name>
<protein>
    <recommendedName>
        <fullName>Protein TraE</fullName>
    </recommendedName>
</protein>
<sequence length="188" mass="21219">MEHGARLSTSRVMAIAFIFMSVLIVLSLSVNVIQGVNNYRLQNEQRTAVTPMGFNVPFAVSQNSADASYLQQMALSFIALRLNVSSETVDASHQALLQYIRPGAQNQMKVILAEEAKRIKNDNVNSAFFQTSVRVWPQYGRVEIHGVLKTWIGDSKPFTDIKHYILILKRENGVTWLDNFGETDDEKK</sequence>
<evidence type="ECO:0000305" key="1"/>
<keyword id="KW-0184">Conjugation</keyword>
<keyword id="KW-0614">Plasmid</keyword>
<organism>
    <name type="scientific">Escherichia coli</name>
    <dbReference type="NCBI Taxonomy" id="562"/>
    <lineage>
        <taxon>Bacteria</taxon>
        <taxon>Pseudomonadati</taxon>
        <taxon>Pseudomonadota</taxon>
        <taxon>Gammaproteobacteria</taxon>
        <taxon>Enterobacterales</taxon>
        <taxon>Enterobacteriaceae</taxon>
        <taxon>Escherichia</taxon>
    </lineage>
</organism>
<feature type="chain" id="PRO_0000068451" description="Protein TraE">
    <location>
        <begin position="1"/>
        <end position="188"/>
    </location>
</feature>
<geneLocation type="plasmid">
    <name>IncFII R1-19</name>
    <name>R1 drd-19</name>
</geneLocation>
<accession>P10514</accession>